<comment type="function">
    <text evidence="1">One of the proteins required for the normal export of preproteins out of the cell cytoplasm. It is a molecular chaperone that binds to a subset of precursor proteins, maintaining them in a translocation-competent state. It also specifically binds to its receptor SecA.</text>
</comment>
<comment type="subunit">
    <text evidence="1">Homotetramer, a dimer of dimers. One homotetramer interacts with 1 SecA dimer.</text>
</comment>
<comment type="subcellular location">
    <subcellularLocation>
        <location evidence="1">Cytoplasm</location>
    </subcellularLocation>
</comment>
<comment type="similarity">
    <text evidence="1">Belongs to the SecB family.</text>
</comment>
<keyword id="KW-0143">Chaperone</keyword>
<keyword id="KW-0963">Cytoplasm</keyword>
<keyword id="KW-0653">Protein transport</keyword>
<keyword id="KW-1185">Reference proteome</keyword>
<keyword id="KW-0811">Translocation</keyword>
<keyword id="KW-0813">Transport</keyword>
<organism>
    <name type="scientific">Rhizobium meliloti (strain 1021)</name>
    <name type="common">Ensifer meliloti</name>
    <name type="synonym">Sinorhizobium meliloti</name>
    <dbReference type="NCBI Taxonomy" id="266834"/>
    <lineage>
        <taxon>Bacteria</taxon>
        <taxon>Pseudomonadati</taxon>
        <taxon>Pseudomonadota</taxon>
        <taxon>Alphaproteobacteria</taxon>
        <taxon>Hyphomicrobiales</taxon>
        <taxon>Rhizobiaceae</taxon>
        <taxon>Sinorhizobium/Ensifer group</taxon>
        <taxon>Sinorhizobium</taxon>
    </lineage>
</organism>
<dbReference type="EMBL" id="AL591688">
    <property type="protein sequence ID" value="CAC41393.1"/>
    <property type="molecule type" value="Genomic_DNA"/>
</dbReference>
<dbReference type="RefSeq" id="NP_384112.1">
    <property type="nucleotide sequence ID" value="NC_003047.1"/>
</dbReference>
<dbReference type="RefSeq" id="WP_010968288.1">
    <property type="nucleotide sequence ID" value="NC_003047.1"/>
</dbReference>
<dbReference type="SMR" id="Q92TE7"/>
<dbReference type="EnsemblBacteria" id="CAC41393">
    <property type="protein sequence ID" value="CAC41393"/>
    <property type="gene ID" value="SMc02788"/>
</dbReference>
<dbReference type="KEGG" id="sme:SMc02788"/>
<dbReference type="PATRIC" id="fig|266834.11.peg.1358"/>
<dbReference type="eggNOG" id="COG1952">
    <property type="taxonomic scope" value="Bacteria"/>
</dbReference>
<dbReference type="HOGENOM" id="CLU_111574_0_0_5"/>
<dbReference type="OrthoDB" id="9795145at2"/>
<dbReference type="Proteomes" id="UP000001976">
    <property type="component" value="Chromosome"/>
</dbReference>
<dbReference type="GO" id="GO:0005737">
    <property type="term" value="C:cytoplasm"/>
    <property type="evidence" value="ECO:0007669"/>
    <property type="project" value="UniProtKB-SubCell"/>
</dbReference>
<dbReference type="GO" id="GO:0051082">
    <property type="term" value="F:unfolded protein binding"/>
    <property type="evidence" value="ECO:0007669"/>
    <property type="project" value="InterPro"/>
</dbReference>
<dbReference type="GO" id="GO:0006457">
    <property type="term" value="P:protein folding"/>
    <property type="evidence" value="ECO:0007669"/>
    <property type="project" value="UniProtKB-UniRule"/>
</dbReference>
<dbReference type="GO" id="GO:0051262">
    <property type="term" value="P:protein tetramerization"/>
    <property type="evidence" value="ECO:0007669"/>
    <property type="project" value="InterPro"/>
</dbReference>
<dbReference type="GO" id="GO:0015031">
    <property type="term" value="P:protein transport"/>
    <property type="evidence" value="ECO:0007669"/>
    <property type="project" value="UniProtKB-UniRule"/>
</dbReference>
<dbReference type="Gene3D" id="3.10.420.10">
    <property type="entry name" value="SecB-like"/>
    <property type="match status" value="1"/>
</dbReference>
<dbReference type="HAMAP" id="MF_00821">
    <property type="entry name" value="SecB"/>
    <property type="match status" value="1"/>
</dbReference>
<dbReference type="InterPro" id="IPR003708">
    <property type="entry name" value="SecB"/>
</dbReference>
<dbReference type="InterPro" id="IPR035958">
    <property type="entry name" value="SecB-like_sf"/>
</dbReference>
<dbReference type="NCBIfam" id="NF004392">
    <property type="entry name" value="PRK05751.1-3"/>
    <property type="match status" value="1"/>
</dbReference>
<dbReference type="NCBIfam" id="TIGR00809">
    <property type="entry name" value="secB"/>
    <property type="match status" value="1"/>
</dbReference>
<dbReference type="PANTHER" id="PTHR36918">
    <property type="match status" value="1"/>
</dbReference>
<dbReference type="PANTHER" id="PTHR36918:SF1">
    <property type="entry name" value="PROTEIN-EXPORT PROTEIN SECB"/>
    <property type="match status" value="1"/>
</dbReference>
<dbReference type="Pfam" id="PF02556">
    <property type="entry name" value="SecB"/>
    <property type="match status" value="1"/>
</dbReference>
<dbReference type="PRINTS" id="PR01594">
    <property type="entry name" value="SECBCHAPRONE"/>
</dbReference>
<dbReference type="SUPFAM" id="SSF54611">
    <property type="entry name" value="SecB-like"/>
    <property type="match status" value="1"/>
</dbReference>
<gene>
    <name evidence="1" type="primary">secB</name>
    <name type="ordered locus">R00006</name>
    <name type="ORF">SMc02788</name>
</gene>
<accession>Q92TE7</accession>
<name>SECB_RHIME</name>
<proteinExistence type="inferred from homology"/>
<reference key="1">
    <citation type="journal article" date="2001" name="Proc. Natl. Acad. Sci. U.S.A.">
        <title>Analysis of the chromosome sequence of the legume symbiont Sinorhizobium meliloti strain 1021.</title>
        <authorList>
            <person name="Capela D."/>
            <person name="Barloy-Hubler F."/>
            <person name="Gouzy J."/>
            <person name="Bothe G."/>
            <person name="Ampe F."/>
            <person name="Batut J."/>
            <person name="Boistard P."/>
            <person name="Becker A."/>
            <person name="Boutry M."/>
            <person name="Cadieu E."/>
            <person name="Dreano S."/>
            <person name="Gloux S."/>
            <person name="Godrie T."/>
            <person name="Goffeau A."/>
            <person name="Kahn D."/>
            <person name="Kiss E."/>
            <person name="Lelaure V."/>
            <person name="Masuy D."/>
            <person name="Pohl T."/>
            <person name="Portetelle D."/>
            <person name="Puehler A."/>
            <person name="Purnelle B."/>
            <person name="Ramsperger U."/>
            <person name="Renard C."/>
            <person name="Thebault P."/>
            <person name="Vandenbol M."/>
            <person name="Weidner S."/>
            <person name="Galibert F."/>
        </authorList>
    </citation>
    <scope>NUCLEOTIDE SEQUENCE [LARGE SCALE GENOMIC DNA]</scope>
    <source>
        <strain>1021</strain>
    </source>
</reference>
<reference key="2">
    <citation type="journal article" date="2001" name="Science">
        <title>The composite genome of the legume symbiont Sinorhizobium meliloti.</title>
        <authorList>
            <person name="Galibert F."/>
            <person name="Finan T.M."/>
            <person name="Long S.R."/>
            <person name="Puehler A."/>
            <person name="Abola P."/>
            <person name="Ampe F."/>
            <person name="Barloy-Hubler F."/>
            <person name="Barnett M.J."/>
            <person name="Becker A."/>
            <person name="Boistard P."/>
            <person name="Bothe G."/>
            <person name="Boutry M."/>
            <person name="Bowser L."/>
            <person name="Buhrmester J."/>
            <person name="Cadieu E."/>
            <person name="Capela D."/>
            <person name="Chain P."/>
            <person name="Cowie A."/>
            <person name="Davis R.W."/>
            <person name="Dreano S."/>
            <person name="Federspiel N.A."/>
            <person name="Fisher R.F."/>
            <person name="Gloux S."/>
            <person name="Godrie T."/>
            <person name="Goffeau A."/>
            <person name="Golding B."/>
            <person name="Gouzy J."/>
            <person name="Gurjal M."/>
            <person name="Hernandez-Lucas I."/>
            <person name="Hong A."/>
            <person name="Huizar L."/>
            <person name="Hyman R.W."/>
            <person name="Jones T."/>
            <person name="Kahn D."/>
            <person name="Kahn M.L."/>
            <person name="Kalman S."/>
            <person name="Keating D.H."/>
            <person name="Kiss E."/>
            <person name="Komp C."/>
            <person name="Lelaure V."/>
            <person name="Masuy D."/>
            <person name="Palm C."/>
            <person name="Peck M.C."/>
            <person name="Pohl T.M."/>
            <person name="Portetelle D."/>
            <person name="Purnelle B."/>
            <person name="Ramsperger U."/>
            <person name="Surzycki R."/>
            <person name="Thebault P."/>
            <person name="Vandenbol M."/>
            <person name="Vorhoelter F.J."/>
            <person name="Weidner S."/>
            <person name="Wells D.H."/>
            <person name="Wong K."/>
            <person name="Yeh K.-C."/>
            <person name="Batut J."/>
        </authorList>
    </citation>
    <scope>NUCLEOTIDE SEQUENCE [LARGE SCALE GENOMIC DNA]</scope>
    <source>
        <strain>1021</strain>
    </source>
</reference>
<protein>
    <recommendedName>
        <fullName evidence="1">Protein-export protein SecB</fullName>
    </recommendedName>
</protein>
<feature type="chain" id="PRO_0000055406" description="Protein-export protein SecB">
    <location>
        <begin position="1"/>
        <end position="168"/>
    </location>
</feature>
<evidence type="ECO:0000255" key="1">
    <source>
        <dbReference type="HAMAP-Rule" id="MF_00821"/>
    </source>
</evidence>
<sequence length="168" mass="18358">MTTDTASNGNGSAQQQSPSLNILAQYVKDLSFENPGAPRSLQARDRSPSININVNVNANPLAENDFDVVLSLSAQAKDGDKMLFNVELAYGGVFRVAGFPQEHMLPLLFIECPRLLFPFARQIVADATRNGGFPPLMIDPIDFAQMFAQRMAEEKVRAQVANTNDTAN</sequence>